<organism>
    <name type="scientific">Proteus mirabilis (strain HI4320)</name>
    <dbReference type="NCBI Taxonomy" id="529507"/>
    <lineage>
        <taxon>Bacteria</taxon>
        <taxon>Pseudomonadati</taxon>
        <taxon>Pseudomonadota</taxon>
        <taxon>Gammaproteobacteria</taxon>
        <taxon>Enterobacterales</taxon>
        <taxon>Morganellaceae</taxon>
        <taxon>Proteus</taxon>
    </lineage>
</organism>
<keyword id="KW-0963">Cytoplasm</keyword>
<keyword id="KW-0489">Methyltransferase</keyword>
<keyword id="KW-1185">Reference proteome</keyword>
<keyword id="KW-0698">rRNA processing</keyword>
<keyword id="KW-0949">S-adenosyl-L-methionine</keyword>
<keyword id="KW-0808">Transferase</keyword>
<gene>
    <name evidence="1" type="primary">rsmJ</name>
    <name type="ordered locus">PMI3006</name>
</gene>
<reference key="1">
    <citation type="journal article" date="2008" name="J. Bacteriol.">
        <title>Complete genome sequence of uropathogenic Proteus mirabilis, a master of both adherence and motility.</title>
        <authorList>
            <person name="Pearson M.M."/>
            <person name="Sebaihia M."/>
            <person name="Churcher C."/>
            <person name="Quail M.A."/>
            <person name="Seshasayee A.S."/>
            <person name="Luscombe N.M."/>
            <person name="Abdellah Z."/>
            <person name="Arrosmith C."/>
            <person name="Atkin B."/>
            <person name="Chillingworth T."/>
            <person name="Hauser H."/>
            <person name="Jagels K."/>
            <person name="Moule S."/>
            <person name="Mungall K."/>
            <person name="Norbertczak H."/>
            <person name="Rabbinowitsch E."/>
            <person name="Walker D."/>
            <person name="Whithead S."/>
            <person name="Thomson N.R."/>
            <person name="Rather P.N."/>
            <person name="Parkhill J."/>
            <person name="Mobley H.L.T."/>
        </authorList>
    </citation>
    <scope>NUCLEOTIDE SEQUENCE [LARGE SCALE GENOMIC DNA]</scope>
    <source>
        <strain>HI4320</strain>
    </source>
</reference>
<protein>
    <recommendedName>
        <fullName evidence="1">Ribosomal RNA small subunit methyltransferase J</fullName>
        <ecNumber evidence="1">2.1.1.242</ecNumber>
    </recommendedName>
    <alternativeName>
        <fullName evidence="1">16S rRNA m2G1516 methyltransferase</fullName>
    </alternativeName>
    <alternativeName>
        <fullName evidence="1">rRNA (guanine-N(2)-)-methyltransferase</fullName>
    </alternativeName>
</protein>
<dbReference type="EC" id="2.1.1.242" evidence="1"/>
<dbReference type="EMBL" id="AM942759">
    <property type="protein sequence ID" value="CAR45920.1"/>
    <property type="molecule type" value="Genomic_DNA"/>
</dbReference>
<dbReference type="RefSeq" id="WP_012368588.1">
    <property type="nucleotide sequence ID" value="NC_010554.1"/>
</dbReference>
<dbReference type="SMR" id="B4F016"/>
<dbReference type="EnsemblBacteria" id="CAR45920">
    <property type="protein sequence ID" value="CAR45920"/>
    <property type="gene ID" value="PMI3006"/>
</dbReference>
<dbReference type="GeneID" id="6800818"/>
<dbReference type="KEGG" id="pmr:PMI3006"/>
<dbReference type="eggNOG" id="COG0742">
    <property type="taxonomic scope" value="Bacteria"/>
</dbReference>
<dbReference type="HOGENOM" id="CLU_076324_0_0_6"/>
<dbReference type="Proteomes" id="UP000008319">
    <property type="component" value="Chromosome"/>
</dbReference>
<dbReference type="GO" id="GO:0005737">
    <property type="term" value="C:cytoplasm"/>
    <property type="evidence" value="ECO:0007669"/>
    <property type="project" value="UniProtKB-SubCell"/>
</dbReference>
<dbReference type="GO" id="GO:0008990">
    <property type="term" value="F:rRNA (guanine-N2-)-methyltransferase activity"/>
    <property type="evidence" value="ECO:0007669"/>
    <property type="project" value="UniProtKB-UniRule"/>
</dbReference>
<dbReference type="CDD" id="cd02440">
    <property type="entry name" value="AdoMet_MTases"/>
    <property type="match status" value="1"/>
</dbReference>
<dbReference type="Gene3D" id="3.40.50.150">
    <property type="entry name" value="Vaccinia Virus protein VP39"/>
    <property type="match status" value="1"/>
</dbReference>
<dbReference type="Gene3D" id="3.40.1630.10">
    <property type="entry name" value="YhiQ-like domain"/>
    <property type="match status" value="1"/>
</dbReference>
<dbReference type="HAMAP" id="MF_01523">
    <property type="entry name" value="16SrRNA_methyltr_J"/>
    <property type="match status" value="1"/>
</dbReference>
<dbReference type="InterPro" id="IPR007536">
    <property type="entry name" value="16SrRNA_methylTrfase_J"/>
</dbReference>
<dbReference type="InterPro" id="IPR029063">
    <property type="entry name" value="SAM-dependent_MTases_sf"/>
</dbReference>
<dbReference type="NCBIfam" id="NF008012">
    <property type="entry name" value="PRK10742.1"/>
    <property type="match status" value="1"/>
</dbReference>
<dbReference type="PANTHER" id="PTHR36112">
    <property type="entry name" value="RIBOSOMAL RNA SMALL SUBUNIT METHYLTRANSFERASE J"/>
    <property type="match status" value="1"/>
</dbReference>
<dbReference type="PANTHER" id="PTHR36112:SF1">
    <property type="entry name" value="RIBOSOMAL RNA SMALL SUBUNIT METHYLTRANSFERASE J"/>
    <property type="match status" value="1"/>
</dbReference>
<dbReference type="Pfam" id="PF04445">
    <property type="entry name" value="SAM_MT"/>
    <property type="match status" value="1"/>
</dbReference>
<dbReference type="SUPFAM" id="SSF53335">
    <property type="entry name" value="S-adenosyl-L-methionine-dependent methyltransferases"/>
    <property type="match status" value="1"/>
</dbReference>
<proteinExistence type="inferred from homology"/>
<sequence length="248" mass="27124">MNICLLCEEGADNSALSALAQRWGLIHDATQTMALVLTPTHLELRKQDEPKLGGIYVDFVAGTMAHRRKFGGGRGEAVAKAVGIKKDYLPDVVDATAGLGRDAFVLASIGCNVRMVERHPVVAALLEDGLKRAYLDADIGEWMQQRMKLIYASSAQALTQISPTPDVVYLDPMYPHKTKSALVKKEMRVFQSLVGADEDADALLAPAMALAKKRVVVKRPDYAEPLNNQPAHASVTTKNHRFDIYPCI</sequence>
<evidence type="ECO:0000255" key="1">
    <source>
        <dbReference type="HAMAP-Rule" id="MF_01523"/>
    </source>
</evidence>
<feature type="chain" id="PRO_1000198503" description="Ribosomal RNA small subunit methyltransferase J">
    <location>
        <begin position="1"/>
        <end position="248"/>
    </location>
</feature>
<feature type="binding site" evidence="1">
    <location>
        <begin position="101"/>
        <end position="102"/>
    </location>
    <ligand>
        <name>S-adenosyl-L-methionine</name>
        <dbReference type="ChEBI" id="CHEBI:59789"/>
    </ligand>
</feature>
<feature type="binding site" evidence="1">
    <location>
        <begin position="117"/>
        <end position="118"/>
    </location>
    <ligand>
        <name>S-adenosyl-L-methionine</name>
        <dbReference type="ChEBI" id="CHEBI:59789"/>
    </ligand>
</feature>
<feature type="binding site" evidence="1">
    <location>
        <begin position="153"/>
        <end position="154"/>
    </location>
    <ligand>
        <name>S-adenosyl-L-methionine</name>
        <dbReference type="ChEBI" id="CHEBI:59789"/>
    </ligand>
</feature>
<feature type="binding site" evidence="1">
    <location>
        <position position="171"/>
    </location>
    <ligand>
        <name>S-adenosyl-L-methionine</name>
        <dbReference type="ChEBI" id="CHEBI:59789"/>
    </ligand>
</feature>
<accession>B4F016</accession>
<name>RSMJ_PROMH</name>
<comment type="function">
    <text evidence="1">Specifically methylates the guanosine in position 1516 of 16S rRNA.</text>
</comment>
<comment type="catalytic activity">
    <reaction evidence="1">
        <text>guanosine(1516) in 16S rRNA + S-adenosyl-L-methionine = N(2)-methylguanosine(1516) in 16S rRNA + S-adenosyl-L-homocysteine + H(+)</text>
        <dbReference type="Rhea" id="RHEA:43220"/>
        <dbReference type="Rhea" id="RHEA-COMP:10412"/>
        <dbReference type="Rhea" id="RHEA-COMP:10413"/>
        <dbReference type="ChEBI" id="CHEBI:15378"/>
        <dbReference type="ChEBI" id="CHEBI:57856"/>
        <dbReference type="ChEBI" id="CHEBI:59789"/>
        <dbReference type="ChEBI" id="CHEBI:74269"/>
        <dbReference type="ChEBI" id="CHEBI:74481"/>
        <dbReference type="EC" id="2.1.1.242"/>
    </reaction>
</comment>
<comment type="subcellular location">
    <subcellularLocation>
        <location evidence="1">Cytoplasm</location>
    </subcellularLocation>
</comment>
<comment type="similarity">
    <text evidence="1">Belongs to the methyltransferase superfamily. RsmJ family.</text>
</comment>